<evidence type="ECO:0000255" key="1">
    <source>
        <dbReference type="HAMAP-Rule" id="MF_00134"/>
    </source>
</evidence>
<reference key="1">
    <citation type="journal article" date="2009" name="Stand. Genomic Sci.">
        <title>Complete genome sequence of Beutenbergia cavernae type strain (HKI 0122).</title>
        <authorList>
            <person name="Land M."/>
            <person name="Pukall R."/>
            <person name="Abt B."/>
            <person name="Goker M."/>
            <person name="Rohde M."/>
            <person name="Glavina Del Rio T."/>
            <person name="Tice H."/>
            <person name="Copeland A."/>
            <person name="Cheng J.F."/>
            <person name="Lucas S."/>
            <person name="Chen F."/>
            <person name="Nolan M."/>
            <person name="Bruce D."/>
            <person name="Goodwin L."/>
            <person name="Pitluck S."/>
            <person name="Ivanova N."/>
            <person name="Mavromatis K."/>
            <person name="Ovchinnikova G."/>
            <person name="Pati A."/>
            <person name="Chen A."/>
            <person name="Palaniappan K."/>
            <person name="Hauser L."/>
            <person name="Chang Y.J."/>
            <person name="Jefferies C.C."/>
            <person name="Saunders E."/>
            <person name="Brettin T."/>
            <person name="Detter J.C."/>
            <person name="Han C."/>
            <person name="Chain P."/>
            <person name="Bristow J."/>
            <person name="Eisen J.A."/>
            <person name="Markowitz V."/>
            <person name="Hugenholtz P."/>
            <person name="Kyrpides N.C."/>
            <person name="Klenk H.P."/>
            <person name="Lapidus A."/>
        </authorList>
    </citation>
    <scope>NUCLEOTIDE SEQUENCE [LARGE SCALE GENOMIC DNA]</scope>
    <source>
        <strain>ATCC BAA-8 / DSM 12333 / CCUG 43141 / JCM 11478 / NBRC 16432 / NCIMB 13614 / HKI 0122</strain>
    </source>
</reference>
<comment type="catalytic activity">
    <reaction evidence="1">
        <text>1-(2-carboxyphenylamino)-1-deoxy-D-ribulose 5-phosphate + H(+) = (1S,2R)-1-C-(indol-3-yl)glycerol 3-phosphate + CO2 + H2O</text>
        <dbReference type="Rhea" id="RHEA:23476"/>
        <dbReference type="ChEBI" id="CHEBI:15377"/>
        <dbReference type="ChEBI" id="CHEBI:15378"/>
        <dbReference type="ChEBI" id="CHEBI:16526"/>
        <dbReference type="ChEBI" id="CHEBI:58613"/>
        <dbReference type="ChEBI" id="CHEBI:58866"/>
        <dbReference type="EC" id="4.1.1.48"/>
    </reaction>
</comment>
<comment type="pathway">
    <text evidence="1">Amino-acid biosynthesis; L-tryptophan biosynthesis; L-tryptophan from chorismate: step 4/5.</text>
</comment>
<comment type="similarity">
    <text evidence="1">Belongs to the TrpC family.</text>
</comment>
<proteinExistence type="inferred from homology"/>
<keyword id="KW-0028">Amino-acid biosynthesis</keyword>
<keyword id="KW-0057">Aromatic amino acid biosynthesis</keyword>
<keyword id="KW-0210">Decarboxylase</keyword>
<keyword id="KW-0456">Lyase</keyword>
<keyword id="KW-1185">Reference proteome</keyword>
<keyword id="KW-0822">Tryptophan biosynthesis</keyword>
<dbReference type="EC" id="4.1.1.48" evidence="1"/>
<dbReference type="EMBL" id="CP001618">
    <property type="protein sequence ID" value="ACQ80472.1"/>
    <property type="molecule type" value="Genomic_DNA"/>
</dbReference>
<dbReference type="RefSeq" id="WP_015882712.1">
    <property type="nucleotide sequence ID" value="NC_012669.1"/>
</dbReference>
<dbReference type="SMR" id="C5BV85"/>
<dbReference type="STRING" id="471853.Bcav_2221"/>
<dbReference type="KEGG" id="bcv:Bcav_2221"/>
<dbReference type="eggNOG" id="COG0134">
    <property type="taxonomic scope" value="Bacteria"/>
</dbReference>
<dbReference type="HOGENOM" id="CLU_034247_0_0_11"/>
<dbReference type="OrthoDB" id="9804217at2"/>
<dbReference type="UniPathway" id="UPA00035">
    <property type="reaction ID" value="UER00043"/>
</dbReference>
<dbReference type="Proteomes" id="UP000007962">
    <property type="component" value="Chromosome"/>
</dbReference>
<dbReference type="GO" id="GO:0004425">
    <property type="term" value="F:indole-3-glycerol-phosphate synthase activity"/>
    <property type="evidence" value="ECO:0007669"/>
    <property type="project" value="UniProtKB-UniRule"/>
</dbReference>
<dbReference type="GO" id="GO:0004640">
    <property type="term" value="F:phosphoribosylanthranilate isomerase activity"/>
    <property type="evidence" value="ECO:0007669"/>
    <property type="project" value="TreeGrafter"/>
</dbReference>
<dbReference type="GO" id="GO:0000162">
    <property type="term" value="P:L-tryptophan biosynthetic process"/>
    <property type="evidence" value="ECO:0007669"/>
    <property type="project" value="UniProtKB-UniRule"/>
</dbReference>
<dbReference type="CDD" id="cd00331">
    <property type="entry name" value="IGPS"/>
    <property type="match status" value="1"/>
</dbReference>
<dbReference type="FunFam" id="3.20.20.70:FF:000024">
    <property type="entry name" value="Indole-3-glycerol phosphate synthase"/>
    <property type="match status" value="1"/>
</dbReference>
<dbReference type="Gene3D" id="3.20.20.70">
    <property type="entry name" value="Aldolase class I"/>
    <property type="match status" value="1"/>
</dbReference>
<dbReference type="HAMAP" id="MF_00134_B">
    <property type="entry name" value="IGPS_B"/>
    <property type="match status" value="1"/>
</dbReference>
<dbReference type="InterPro" id="IPR013785">
    <property type="entry name" value="Aldolase_TIM"/>
</dbReference>
<dbReference type="InterPro" id="IPR045186">
    <property type="entry name" value="Indole-3-glycerol_P_synth"/>
</dbReference>
<dbReference type="InterPro" id="IPR013798">
    <property type="entry name" value="Indole-3-glycerol_P_synth_dom"/>
</dbReference>
<dbReference type="InterPro" id="IPR001468">
    <property type="entry name" value="Indole-3-GlycerolPSynthase_CS"/>
</dbReference>
<dbReference type="InterPro" id="IPR011060">
    <property type="entry name" value="RibuloseP-bd_barrel"/>
</dbReference>
<dbReference type="NCBIfam" id="NF001369">
    <property type="entry name" value="PRK00278.1-1"/>
    <property type="match status" value="1"/>
</dbReference>
<dbReference type="NCBIfam" id="NF001377">
    <property type="entry name" value="PRK00278.2-4"/>
    <property type="match status" value="1"/>
</dbReference>
<dbReference type="PANTHER" id="PTHR22854:SF2">
    <property type="entry name" value="INDOLE-3-GLYCEROL-PHOSPHATE SYNTHASE"/>
    <property type="match status" value="1"/>
</dbReference>
<dbReference type="PANTHER" id="PTHR22854">
    <property type="entry name" value="TRYPTOPHAN BIOSYNTHESIS PROTEIN"/>
    <property type="match status" value="1"/>
</dbReference>
<dbReference type="Pfam" id="PF00218">
    <property type="entry name" value="IGPS"/>
    <property type="match status" value="1"/>
</dbReference>
<dbReference type="SUPFAM" id="SSF51366">
    <property type="entry name" value="Ribulose-phoshate binding barrel"/>
    <property type="match status" value="1"/>
</dbReference>
<dbReference type="PROSITE" id="PS00614">
    <property type="entry name" value="IGPS"/>
    <property type="match status" value="1"/>
</dbReference>
<sequence length="270" mass="27958">MTVLEDIVAGVREDLATREAATPLAVVKEQALARAGAKSAVDVLRREDAIAVIAEVKRSSPSKGALADIADPAGLAADYEAGGASVVSVLTEQRRFGGSLADLDAVRAAVDVPVLRKDFVVSPYQVWEARAHGADLVLLIVAALEQTVLTSLVERVHSLGMTALVEAHDVGEAHRAIDAGARVLGINARNLHTLEVDRATFAEVVGVVPDGVVKVAESGVRGPHDVLEYARAGADAVLVGESLVTQGNPRGAVADLVAAGAHPALRAVRH</sequence>
<name>TRPC_BEUC1</name>
<protein>
    <recommendedName>
        <fullName evidence="1">Indole-3-glycerol phosphate synthase</fullName>
        <shortName evidence="1">IGPS</shortName>
        <ecNumber evidence="1">4.1.1.48</ecNumber>
    </recommendedName>
</protein>
<accession>C5BV85</accession>
<gene>
    <name evidence="1" type="primary">trpC</name>
    <name type="ordered locus">Bcav_2221</name>
</gene>
<organism>
    <name type="scientific">Beutenbergia cavernae (strain ATCC BAA-8 / DSM 12333 / CCUG 43141 / JCM 11478 / NBRC 16432 / NCIMB 13614 / HKI 0122)</name>
    <dbReference type="NCBI Taxonomy" id="471853"/>
    <lineage>
        <taxon>Bacteria</taxon>
        <taxon>Bacillati</taxon>
        <taxon>Actinomycetota</taxon>
        <taxon>Actinomycetes</taxon>
        <taxon>Micrococcales</taxon>
        <taxon>Beutenbergiaceae</taxon>
        <taxon>Beutenbergia</taxon>
    </lineage>
</organism>
<feature type="chain" id="PRO_1000203198" description="Indole-3-glycerol phosphate synthase">
    <location>
        <begin position="1"/>
        <end position="270"/>
    </location>
</feature>